<comment type="function">
    <text evidence="1">This is one of the proteins that bind and probably mediate the attachment of the 5S RNA into the large ribosomal subunit, where it forms part of the central protuberance. In the 70S ribosome it contacts protein S13 of the 30S subunit (bridge B1b), connecting the 2 subunits; this bridge is implicated in subunit movement. Contacts the P site tRNA; the 5S rRNA and some of its associated proteins might help stabilize positioning of ribosome-bound tRNAs.</text>
</comment>
<comment type="subunit">
    <text evidence="1">Part of the 50S ribosomal subunit; part of the 5S rRNA/L5/L18/L25 subcomplex. Contacts the 5S rRNA and the P site tRNA. Forms a bridge to the 30S subunit in the 70S ribosome.</text>
</comment>
<comment type="similarity">
    <text evidence="1">Belongs to the universal ribosomal protein uL5 family.</text>
</comment>
<name>RL5_AQUAE</name>
<proteinExistence type="inferred from homology"/>
<evidence type="ECO:0000255" key="1">
    <source>
        <dbReference type="HAMAP-Rule" id="MF_01333"/>
    </source>
</evidence>
<evidence type="ECO:0000305" key="2"/>
<protein>
    <recommendedName>
        <fullName evidence="1">Large ribosomal subunit protein uL5</fullName>
    </recommendedName>
    <alternativeName>
        <fullName evidence="2">50S ribosomal protein L5</fullName>
    </alternativeName>
</protein>
<feature type="chain" id="PRO_0000124885" description="Large ribosomal subunit protein uL5">
    <location>
        <begin position="1"/>
        <end position="188"/>
    </location>
</feature>
<reference key="1">
    <citation type="journal article" date="1998" name="Nature">
        <title>The complete genome of the hyperthermophilic bacterium Aquifex aeolicus.</title>
        <authorList>
            <person name="Deckert G."/>
            <person name="Warren P.V."/>
            <person name="Gaasterland T."/>
            <person name="Young W.G."/>
            <person name="Lenox A.L."/>
            <person name="Graham D.E."/>
            <person name="Overbeek R."/>
            <person name="Snead M.A."/>
            <person name="Keller M."/>
            <person name="Aujay M."/>
            <person name="Huber R."/>
            <person name="Feldman R.A."/>
            <person name="Short J.M."/>
            <person name="Olsen G.J."/>
            <person name="Swanson R.V."/>
        </authorList>
    </citation>
    <scope>NUCLEOTIDE SEQUENCE [LARGE SCALE GENOMIC DNA]</scope>
    <source>
        <strain>VF5</strain>
    </source>
</reference>
<accession>O67568</accession>
<gene>
    <name evidence="1" type="primary">rplE</name>
    <name type="ordered locus">aq_1652</name>
</gene>
<sequence length="188" mass="21624">MSATETKYVPRLYKKYKEEVVPILQKKFNYKSPMQIPRLQKIVVNMGVGEAVQDIRQLERAVEDLRAITGQQPVITRARKSEAGFKLRKGMPIGCKVTLRKERMWDFLDKLISVALPRVKDFKGLSPRSFDGRGNYAFGIAEQIVFPEIDYDKVDRIRGMDIIINTTAETDEEAFWLLSLLGLPIRSM</sequence>
<organism>
    <name type="scientific">Aquifex aeolicus (strain VF5)</name>
    <dbReference type="NCBI Taxonomy" id="224324"/>
    <lineage>
        <taxon>Bacteria</taxon>
        <taxon>Pseudomonadati</taxon>
        <taxon>Aquificota</taxon>
        <taxon>Aquificia</taxon>
        <taxon>Aquificales</taxon>
        <taxon>Aquificaceae</taxon>
        <taxon>Aquifex</taxon>
    </lineage>
</organism>
<dbReference type="EMBL" id="AE000657">
    <property type="protein sequence ID" value="AAC07529.1"/>
    <property type="molecule type" value="Genomic_DNA"/>
</dbReference>
<dbReference type="PIR" id="G70442">
    <property type="entry name" value="G70442"/>
</dbReference>
<dbReference type="RefSeq" id="NP_214134.1">
    <property type="nucleotide sequence ID" value="NC_000918.1"/>
</dbReference>
<dbReference type="RefSeq" id="WP_010881071.1">
    <property type="nucleotide sequence ID" value="NC_000918.1"/>
</dbReference>
<dbReference type="SMR" id="O67568"/>
<dbReference type="FunCoup" id="O67568">
    <property type="interactions" value="495"/>
</dbReference>
<dbReference type="STRING" id="224324.aq_1652"/>
<dbReference type="EnsemblBacteria" id="AAC07529">
    <property type="protein sequence ID" value="AAC07529"/>
    <property type="gene ID" value="aq_1652"/>
</dbReference>
<dbReference type="KEGG" id="aae:aq_1652"/>
<dbReference type="PATRIC" id="fig|224324.8.peg.1274"/>
<dbReference type="eggNOG" id="COG0094">
    <property type="taxonomic scope" value="Bacteria"/>
</dbReference>
<dbReference type="HOGENOM" id="CLU_061015_2_1_0"/>
<dbReference type="InParanoid" id="O67568"/>
<dbReference type="OrthoDB" id="9806626at2"/>
<dbReference type="Proteomes" id="UP000000798">
    <property type="component" value="Chromosome"/>
</dbReference>
<dbReference type="GO" id="GO:0022625">
    <property type="term" value="C:cytosolic large ribosomal subunit"/>
    <property type="evidence" value="ECO:0000318"/>
    <property type="project" value="GO_Central"/>
</dbReference>
<dbReference type="GO" id="GO:0003723">
    <property type="term" value="F:RNA binding"/>
    <property type="evidence" value="ECO:0000318"/>
    <property type="project" value="GO_Central"/>
</dbReference>
<dbReference type="GO" id="GO:0019843">
    <property type="term" value="F:rRNA binding"/>
    <property type="evidence" value="ECO:0007669"/>
    <property type="project" value="UniProtKB-UniRule"/>
</dbReference>
<dbReference type="GO" id="GO:0003735">
    <property type="term" value="F:structural constituent of ribosome"/>
    <property type="evidence" value="ECO:0000318"/>
    <property type="project" value="GO_Central"/>
</dbReference>
<dbReference type="GO" id="GO:0000049">
    <property type="term" value="F:tRNA binding"/>
    <property type="evidence" value="ECO:0007669"/>
    <property type="project" value="UniProtKB-UniRule"/>
</dbReference>
<dbReference type="GO" id="GO:0006412">
    <property type="term" value="P:translation"/>
    <property type="evidence" value="ECO:0000318"/>
    <property type="project" value="GO_Central"/>
</dbReference>
<dbReference type="FunFam" id="3.30.1440.10:FF:000001">
    <property type="entry name" value="50S ribosomal protein L5"/>
    <property type="match status" value="1"/>
</dbReference>
<dbReference type="Gene3D" id="3.30.1440.10">
    <property type="match status" value="1"/>
</dbReference>
<dbReference type="HAMAP" id="MF_01333_B">
    <property type="entry name" value="Ribosomal_uL5_B"/>
    <property type="match status" value="1"/>
</dbReference>
<dbReference type="InterPro" id="IPR002132">
    <property type="entry name" value="Ribosomal_uL5"/>
</dbReference>
<dbReference type="InterPro" id="IPR020930">
    <property type="entry name" value="Ribosomal_uL5_bac-type"/>
</dbReference>
<dbReference type="InterPro" id="IPR031309">
    <property type="entry name" value="Ribosomal_uL5_C"/>
</dbReference>
<dbReference type="InterPro" id="IPR020929">
    <property type="entry name" value="Ribosomal_uL5_CS"/>
</dbReference>
<dbReference type="InterPro" id="IPR022803">
    <property type="entry name" value="Ribosomal_uL5_dom_sf"/>
</dbReference>
<dbReference type="InterPro" id="IPR031310">
    <property type="entry name" value="Ribosomal_uL5_N"/>
</dbReference>
<dbReference type="NCBIfam" id="NF000585">
    <property type="entry name" value="PRK00010.1"/>
    <property type="match status" value="1"/>
</dbReference>
<dbReference type="PANTHER" id="PTHR11994">
    <property type="entry name" value="60S RIBOSOMAL PROTEIN L11-RELATED"/>
    <property type="match status" value="1"/>
</dbReference>
<dbReference type="Pfam" id="PF00281">
    <property type="entry name" value="Ribosomal_L5"/>
    <property type="match status" value="1"/>
</dbReference>
<dbReference type="Pfam" id="PF00673">
    <property type="entry name" value="Ribosomal_L5_C"/>
    <property type="match status" value="1"/>
</dbReference>
<dbReference type="PIRSF" id="PIRSF002161">
    <property type="entry name" value="Ribosomal_L5"/>
    <property type="match status" value="1"/>
</dbReference>
<dbReference type="SUPFAM" id="SSF55282">
    <property type="entry name" value="RL5-like"/>
    <property type="match status" value="1"/>
</dbReference>
<dbReference type="PROSITE" id="PS00358">
    <property type="entry name" value="RIBOSOMAL_L5"/>
    <property type="match status" value="1"/>
</dbReference>
<keyword id="KW-1185">Reference proteome</keyword>
<keyword id="KW-0687">Ribonucleoprotein</keyword>
<keyword id="KW-0689">Ribosomal protein</keyword>
<keyword id="KW-0694">RNA-binding</keyword>
<keyword id="KW-0699">rRNA-binding</keyword>
<keyword id="KW-0820">tRNA-binding</keyword>